<proteinExistence type="inferred from homology"/>
<organism>
    <name type="scientific">Escherichia coli O9:H4 (strain HS)</name>
    <dbReference type="NCBI Taxonomy" id="331112"/>
    <lineage>
        <taxon>Bacteria</taxon>
        <taxon>Pseudomonadati</taxon>
        <taxon>Pseudomonadota</taxon>
        <taxon>Gammaproteobacteria</taxon>
        <taxon>Enterobacterales</taxon>
        <taxon>Enterobacteriaceae</taxon>
        <taxon>Escherichia</taxon>
    </lineage>
</organism>
<keyword id="KW-0694">RNA-binding</keyword>
<keyword id="KW-0346">Stress response</keyword>
<sequence length="102" mass="11166">MAKGQSLQDPFLNALRRERVPVSIYLVNGIKLQGQIESFDQFVILLKNTVSQMVYKHAISTVVPSRPVSHHSNNAGGGTSSNYHHGSSAQNTSAQQDSEETE</sequence>
<gene>
    <name evidence="1" type="primary">hfq</name>
    <name type="ordered locus">EcHS_A4414</name>
</gene>
<dbReference type="EMBL" id="CP000802">
    <property type="protein sequence ID" value="ABV08570.1"/>
    <property type="molecule type" value="Genomic_DNA"/>
</dbReference>
<dbReference type="RefSeq" id="WP_001051883.1">
    <property type="nucleotide sequence ID" value="NC_009800.1"/>
</dbReference>
<dbReference type="SMR" id="A8A7R6"/>
<dbReference type="GeneID" id="93777649"/>
<dbReference type="KEGG" id="ecx:EcHS_A4414"/>
<dbReference type="HOGENOM" id="CLU_113688_2_1_6"/>
<dbReference type="GO" id="GO:0005829">
    <property type="term" value="C:cytosol"/>
    <property type="evidence" value="ECO:0007669"/>
    <property type="project" value="TreeGrafter"/>
</dbReference>
<dbReference type="GO" id="GO:0003723">
    <property type="term" value="F:RNA binding"/>
    <property type="evidence" value="ECO:0007669"/>
    <property type="project" value="UniProtKB-UniRule"/>
</dbReference>
<dbReference type="GO" id="GO:0006355">
    <property type="term" value="P:regulation of DNA-templated transcription"/>
    <property type="evidence" value="ECO:0007669"/>
    <property type="project" value="InterPro"/>
</dbReference>
<dbReference type="GO" id="GO:0043487">
    <property type="term" value="P:regulation of RNA stability"/>
    <property type="evidence" value="ECO:0007669"/>
    <property type="project" value="TreeGrafter"/>
</dbReference>
<dbReference type="GO" id="GO:0045974">
    <property type="term" value="P:regulation of translation, ncRNA-mediated"/>
    <property type="evidence" value="ECO:0007669"/>
    <property type="project" value="TreeGrafter"/>
</dbReference>
<dbReference type="CDD" id="cd01716">
    <property type="entry name" value="Hfq"/>
    <property type="match status" value="1"/>
</dbReference>
<dbReference type="FunFam" id="2.30.30.100:FF:000001">
    <property type="entry name" value="RNA-binding protein Hfq"/>
    <property type="match status" value="1"/>
</dbReference>
<dbReference type="Gene3D" id="2.30.30.100">
    <property type="match status" value="1"/>
</dbReference>
<dbReference type="HAMAP" id="MF_00436">
    <property type="entry name" value="Hfq"/>
    <property type="match status" value="1"/>
</dbReference>
<dbReference type="InterPro" id="IPR005001">
    <property type="entry name" value="Hfq"/>
</dbReference>
<dbReference type="InterPro" id="IPR010920">
    <property type="entry name" value="LSM_dom_sf"/>
</dbReference>
<dbReference type="InterPro" id="IPR047575">
    <property type="entry name" value="Sm"/>
</dbReference>
<dbReference type="NCBIfam" id="TIGR02383">
    <property type="entry name" value="Hfq"/>
    <property type="match status" value="1"/>
</dbReference>
<dbReference type="NCBIfam" id="NF001602">
    <property type="entry name" value="PRK00395.1"/>
    <property type="match status" value="1"/>
</dbReference>
<dbReference type="PANTHER" id="PTHR34772">
    <property type="entry name" value="RNA-BINDING PROTEIN HFQ"/>
    <property type="match status" value="1"/>
</dbReference>
<dbReference type="PANTHER" id="PTHR34772:SF1">
    <property type="entry name" value="RNA-BINDING PROTEIN HFQ"/>
    <property type="match status" value="1"/>
</dbReference>
<dbReference type="Pfam" id="PF17209">
    <property type="entry name" value="Hfq"/>
    <property type="match status" value="1"/>
</dbReference>
<dbReference type="SUPFAM" id="SSF50182">
    <property type="entry name" value="Sm-like ribonucleoproteins"/>
    <property type="match status" value="1"/>
</dbReference>
<dbReference type="PROSITE" id="PS52002">
    <property type="entry name" value="SM"/>
    <property type="match status" value="1"/>
</dbReference>
<evidence type="ECO:0000255" key="1">
    <source>
        <dbReference type="HAMAP-Rule" id="MF_00436"/>
    </source>
</evidence>
<evidence type="ECO:0000255" key="2">
    <source>
        <dbReference type="PROSITE-ProRule" id="PRU01346"/>
    </source>
</evidence>
<evidence type="ECO:0000256" key="3">
    <source>
        <dbReference type="SAM" id="MobiDB-lite"/>
    </source>
</evidence>
<feature type="chain" id="PRO_1000060239" description="RNA-binding protein Hfq">
    <location>
        <begin position="1"/>
        <end position="102"/>
    </location>
</feature>
<feature type="domain" description="Sm" evidence="2">
    <location>
        <begin position="9"/>
        <end position="68"/>
    </location>
</feature>
<feature type="region of interest" description="Disordered" evidence="3">
    <location>
        <begin position="63"/>
        <end position="102"/>
    </location>
</feature>
<feature type="compositionally biased region" description="Polar residues" evidence="3">
    <location>
        <begin position="70"/>
        <end position="96"/>
    </location>
</feature>
<accession>A8A7R6</accession>
<comment type="function">
    <text evidence="1">RNA chaperone that binds small regulatory RNA (sRNAs) and mRNAs to facilitate mRNA translational regulation in response to envelope stress, environmental stress and changes in metabolite concentrations. Also binds with high specificity to tRNAs.</text>
</comment>
<comment type="subunit">
    <text evidence="1">Homohexamer.</text>
</comment>
<comment type="similarity">
    <text evidence="1">Belongs to the Hfq family.</text>
</comment>
<name>HFQ_ECOHS</name>
<protein>
    <recommendedName>
        <fullName evidence="1">RNA-binding protein Hfq</fullName>
    </recommendedName>
</protein>
<reference key="1">
    <citation type="journal article" date="2008" name="J. Bacteriol.">
        <title>The pangenome structure of Escherichia coli: comparative genomic analysis of E. coli commensal and pathogenic isolates.</title>
        <authorList>
            <person name="Rasko D.A."/>
            <person name="Rosovitz M.J."/>
            <person name="Myers G.S.A."/>
            <person name="Mongodin E.F."/>
            <person name="Fricke W.F."/>
            <person name="Gajer P."/>
            <person name="Crabtree J."/>
            <person name="Sebaihia M."/>
            <person name="Thomson N.R."/>
            <person name="Chaudhuri R."/>
            <person name="Henderson I.R."/>
            <person name="Sperandio V."/>
            <person name="Ravel J."/>
        </authorList>
    </citation>
    <scope>NUCLEOTIDE SEQUENCE [LARGE SCALE GENOMIC DNA]</scope>
    <source>
        <strain>HS</strain>
    </source>
</reference>